<dbReference type="EMBL" id="AP009368">
    <property type="protein sequence ID" value="BAF49941.1"/>
    <property type="molecule type" value="Genomic_DNA"/>
</dbReference>
<dbReference type="RefSeq" id="YP_001123117.1">
    <property type="nucleotide sequence ID" value="NC_009267.1"/>
</dbReference>
<dbReference type="SMR" id="A4QJT5"/>
<dbReference type="GeneID" id="4962435"/>
<dbReference type="GO" id="GO:0009507">
    <property type="term" value="C:chloroplast"/>
    <property type="evidence" value="ECO:0007669"/>
    <property type="project" value="UniProtKB-SubCell"/>
</dbReference>
<dbReference type="GO" id="GO:0015935">
    <property type="term" value="C:small ribosomal subunit"/>
    <property type="evidence" value="ECO:0007669"/>
    <property type="project" value="InterPro"/>
</dbReference>
<dbReference type="GO" id="GO:0019843">
    <property type="term" value="F:rRNA binding"/>
    <property type="evidence" value="ECO:0007669"/>
    <property type="project" value="UniProtKB-UniRule"/>
</dbReference>
<dbReference type="GO" id="GO:0003735">
    <property type="term" value="F:structural constituent of ribosome"/>
    <property type="evidence" value="ECO:0007669"/>
    <property type="project" value="InterPro"/>
</dbReference>
<dbReference type="GO" id="GO:0042274">
    <property type="term" value="P:ribosomal small subunit biogenesis"/>
    <property type="evidence" value="ECO:0007669"/>
    <property type="project" value="TreeGrafter"/>
</dbReference>
<dbReference type="GO" id="GO:0006412">
    <property type="term" value="P:translation"/>
    <property type="evidence" value="ECO:0007669"/>
    <property type="project" value="UniProtKB-UniRule"/>
</dbReference>
<dbReference type="CDD" id="cd00165">
    <property type="entry name" value="S4"/>
    <property type="match status" value="1"/>
</dbReference>
<dbReference type="FunFam" id="1.10.1050.10:FF:000002">
    <property type="entry name" value="30S ribosomal protein S4, chloroplastic"/>
    <property type="match status" value="1"/>
</dbReference>
<dbReference type="FunFam" id="3.10.290.10:FF:000081">
    <property type="entry name" value="30S ribosomal protein S4, chloroplastic"/>
    <property type="match status" value="1"/>
</dbReference>
<dbReference type="Gene3D" id="1.10.1050.10">
    <property type="entry name" value="Ribosomal Protein S4 Delta 41, Chain A, domain 1"/>
    <property type="match status" value="1"/>
</dbReference>
<dbReference type="Gene3D" id="3.10.290.10">
    <property type="entry name" value="RNA-binding S4 domain"/>
    <property type="match status" value="1"/>
</dbReference>
<dbReference type="HAMAP" id="MF_01306_B">
    <property type="entry name" value="Ribosomal_uS4_B"/>
    <property type="match status" value="1"/>
</dbReference>
<dbReference type="InterPro" id="IPR022801">
    <property type="entry name" value="Ribosomal_uS4"/>
</dbReference>
<dbReference type="InterPro" id="IPR005709">
    <property type="entry name" value="Ribosomal_uS4_bac-type"/>
</dbReference>
<dbReference type="InterPro" id="IPR018079">
    <property type="entry name" value="Ribosomal_uS4_CS"/>
</dbReference>
<dbReference type="InterPro" id="IPR001912">
    <property type="entry name" value="Ribosomal_uS4_N"/>
</dbReference>
<dbReference type="InterPro" id="IPR002942">
    <property type="entry name" value="S4_RNA-bd"/>
</dbReference>
<dbReference type="InterPro" id="IPR036986">
    <property type="entry name" value="S4_RNA-bd_sf"/>
</dbReference>
<dbReference type="NCBIfam" id="NF003717">
    <property type="entry name" value="PRK05327.1"/>
    <property type="match status" value="1"/>
</dbReference>
<dbReference type="NCBIfam" id="TIGR01017">
    <property type="entry name" value="rpsD_bact"/>
    <property type="match status" value="1"/>
</dbReference>
<dbReference type="PANTHER" id="PTHR11831">
    <property type="entry name" value="30S 40S RIBOSOMAL PROTEIN"/>
    <property type="match status" value="1"/>
</dbReference>
<dbReference type="PANTHER" id="PTHR11831:SF4">
    <property type="entry name" value="SMALL RIBOSOMAL SUBUNIT PROTEIN US4M"/>
    <property type="match status" value="1"/>
</dbReference>
<dbReference type="Pfam" id="PF00163">
    <property type="entry name" value="Ribosomal_S4"/>
    <property type="match status" value="1"/>
</dbReference>
<dbReference type="Pfam" id="PF01479">
    <property type="entry name" value="S4"/>
    <property type="match status" value="1"/>
</dbReference>
<dbReference type="SMART" id="SM01390">
    <property type="entry name" value="Ribosomal_S4"/>
    <property type="match status" value="1"/>
</dbReference>
<dbReference type="SMART" id="SM00363">
    <property type="entry name" value="S4"/>
    <property type="match status" value="1"/>
</dbReference>
<dbReference type="SUPFAM" id="SSF55174">
    <property type="entry name" value="Alpha-L RNA-binding motif"/>
    <property type="match status" value="1"/>
</dbReference>
<dbReference type="PROSITE" id="PS00632">
    <property type="entry name" value="RIBOSOMAL_S4"/>
    <property type="match status" value="1"/>
</dbReference>
<dbReference type="PROSITE" id="PS50889">
    <property type="entry name" value="S4"/>
    <property type="match status" value="1"/>
</dbReference>
<name>RR4_OLIPU</name>
<feature type="chain" id="PRO_0000293433" description="Small ribosomal subunit protein uS4c">
    <location>
        <begin position="1"/>
        <end position="201"/>
    </location>
</feature>
<feature type="domain" description="S4 RNA-binding">
    <location>
        <begin position="89"/>
        <end position="152"/>
    </location>
</feature>
<sequence length="201" mass="23245">MSRYRGPRFKKIRRLGALPGLTSKRPKAGSDLRNQSRSVKKSQYRIRLEEKQKLRFHYGLTERQLLKYVRIAGKAKGSTGQVLLQLLEMRLDNILFRLGMALTIPQARQLVNHGHILVNGRIVDIPSYRCKPRDIITVKDDQNSRTLVQNLLDSSAPEELPNHLTLHTFQYEGLVNQIIDRKCVGLKINELLVVEYYSRQT</sequence>
<gene>
    <name type="primary">rps4</name>
</gene>
<organism>
    <name type="scientific">Olimarabidopsis pumila</name>
    <name type="common">Dwarf rocket</name>
    <name type="synonym">Arabidopsis griffithiana</name>
    <dbReference type="NCBI Taxonomy" id="74718"/>
    <lineage>
        <taxon>Eukaryota</taxon>
        <taxon>Viridiplantae</taxon>
        <taxon>Streptophyta</taxon>
        <taxon>Embryophyta</taxon>
        <taxon>Tracheophyta</taxon>
        <taxon>Spermatophyta</taxon>
        <taxon>Magnoliopsida</taxon>
        <taxon>eudicotyledons</taxon>
        <taxon>Gunneridae</taxon>
        <taxon>Pentapetalae</taxon>
        <taxon>rosids</taxon>
        <taxon>malvids</taxon>
        <taxon>Brassicales</taxon>
        <taxon>Brassicaceae</taxon>
        <taxon>Alyssopsideae</taxon>
        <taxon>Olimarabidopsis</taxon>
    </lineage>
</organism>
<evidence type="ECO:0000250" key="1"/>
<evidence type="ECO:0000305" key="2"/>
<accession>A4QJT5</accession>
<protein>
    <recommendedName>
        <fullName evidence="2">Small ribosomal subunit protein uS4c</fullName>
    </recommendedName>
    <alternativeName>
        <fullName>30S ribosomal protein S4, chloroplastic</fullName>
    </alternativeName>
</protein>
<proteinExistence type="inferred from homology"/>
<geneLocation type="chloroplast"/>
<reference key="1">
    <citation type="submission" date="2007-03" db="EMBL/GenBank/DDBJ databases">
        <title>Sequence analysis of Arabidopsis pumila JS2 chloroplast DNA.</title>
        <authorList>
            <person name="Hosouchi T."/>
            <person name="Tsuruoka H."/>
            <person name="Kotani H."/>
        </authorList>
    </citation>
    <scope>NUCLEOTIDE SEQUENCE [LARGE SCALE GENOMIC DNA]</scope>
</reference>
<comment type="function">
    <text evidence="1">One of the primary rRNA binding proteins, it binds directly to 16S rRNA where it nucleates assembly of the body of the 30S subunit.</text>
</comment>
<comment type="function">
    <text evidence="1">With S5 and S12 plays an important role in translational accuracy.</text>
</comment>
<comment type="subunit">
    <text evidence="1">Part of the 30S ribosomal subunit. Contacts protein S5. The interaction surface between S4 and S5 is involved in control of translational fidelity (By similarity).</text>
</comment>
<comment type="subcellular location">
    <subcellularLocation>
        <location>Plastid</location>
        <location>Chloroplast</location>
    </subcellularLocation>
</comment>
<comment type="similarity">
    <text evidence="2">Belongs to the universal ribosomal protein uS4 family.</text>
</comment>
<keyword id="KW-0150">Chloroplast</keyword>
<keyword id="KW-0934">Plastid</keyword>
<keyword id="KW-0687">Ribonucleoprotein</keyword>
<keyword id="KW-0689">Ribosomal protein</keyword>
<keyword id="KW-0694">RNA-binding</keyword>
<keyword id="KW-0699">rRNA-binding</keyword>